<feature type="chain" id="PRO_0000344306" description="Small ribosomal subunit protein uS7">
    <location>
        <begin position="1"/>
        <end position="155"/>
    </location>
</feature>
<keyword id="KW-0687">Ribonucleoprotein</keyword>
<keyword id="KW-0689">Ribosomal protein</keyword>
<keyword id="KW-0694">RNA-binding</keyword>
<keyword id="KW-0699">rRNA-binding</keyword>
<keyword id="KW-0820">tRNA-binding</keyword>
<protein>
    <recommendedName>
        <fullName evidence="1">Small ribosomal subunit protein uS7</fullName>
    </recommendedName>
    <alternativeName>
        <fullName evidence="2">30S ribosomal protein S7</fullName>
    </alternativeName>
</protein>
<name>RS7_UREP2</name>
<dbReference type="EMBL" id="CP000942">
    <property type="protein sequence ID" value="ACA32721.1"/>
    <property type="molecule type" value="Genomic_DNA"/>
</dbReference>
<dbReference type="RefSeq" id="WP_004026103.1">
    <property type="nucleotide sequence ID" value="NC_010503.1"/>
</dbReference>
<dbReference type="SMR" id="B1AJG5"/>
<dbReference type="GeneID" id="93849073"/>
<dbReference type="KEGG" id="upa:UPA3_0561"/>
<dbReference type="HOGENOM" id="CLU_072226_1_1_14"/>
<dbReference type="Proteomes" id="UP000002162">
    <property type="component" value="Chromosome"/>
</dbReference>
<dbReference type="GO" id="GO:0015935">
    <property type="term" value="C:small ribosomal subunit"/>
    <property type="evidence" value="ECO:0007669"/>
    <property type="project" value="InterPro"/>
</dbReference>
<dbReference type="GO" id="GO:0019843">
    <property type="term" value="F:rRNA binding"/>
    <property type="evidence" value="ECO:0007669"/>
    <property type="project" value="UniProtKB-UniRule"/>
</dbReference>
<dbReference type="GO" id="GO:0003735">
    <property type="term" value="F:structural constituent of ribosome"/>
    <property type="evidence" value="ECO:0007669"/>
    <property type="project" value="InterPro"/>
</dbReference>
<dbReference type="GO" id="GO:0000049">
    <property type="term" value="F:tRNA binding"/>
    <property type="evidence" value="ECO:0007669"/>
    <property type="project" value="UniProtKB-UniRule"/>
</dbReference>
<dbReference type="GO" id="GO:0006412">
    <property type="term" value="P:translation"/>
    <property type="evidence" value="ECO:0007669"/>
    <property type="project" value="UniProtKB-UniRule"/>
</dbReference>
<dbReference type="CDD" id="cd14869">
    <property type="entry name" value="uS7_Bacteria"/>
    <property type="match status" value="1"/>
</dbReference>
<dbReference type="FunFam" id="1.10.455.10:FF:000001">
    <property type="entry name" value="30S ribosomal protein S7"/>
    <property type="match status" value="1"/>
</dbReference>
<dbReference type="Gene3D" id="1.10.455.10">
    <property type="entry name" value="Ribosomal protein S7 domain"/>
    <property type="match status" value="1"/>
</dbReference>
<dbReference type="HAMAP" id="MF_00480_B">
    <property type="entry name" value="Ribosomal_uS7_B"/>
    <property type="match status" value="1"/>
</dbReference>
<dbReference type="InterPro" id="IPR000235">
    <property type="entry name" value="Ribosomal_uS7"/>
</dbReference>
<dbReference type="InterPro" id="IPR005717">
    <property type="entry name" value="Ribosomal_uS7_bac/org-type"/>
</dbReference>
<dbReference type="InterPro" id="IPR020606">
    <property type="entry name" value="Ribosomal_uS7_CS"/>
</dbReference>
<dbReference type="InterPro" id="IPR023798">
    <property type="entry name" value="Ribosomal_uS7_dom"/>
</dbReference>
<dbReference type="InterPro" id="IPR036823">
    <property type="entry name" value="Ribosomal_uS7_dom_sf"/>
</dbReference>
<dbReference type="NCBIfam" id="TIGR01029">
    <property type="entry name" value="rpsG_bact"/>
    <property type="match status" value="1"/>
</dbReference>
<dbReference type="PANTHER" id="PTHR11205">
    <property type="entry name" value="RIBOSOMAL PROTEIN S7"/>
    <property type="match status" value="1"/>
</dbReference>
<dbReference type="Pfam" id="PF00177">
    <property type="entry name" value="Ribosomal_S7"/>
    <property type="match status" value="1"/>
</dbReference>
<dbReference type="PIRSF" id="PIRSF002122">
    <property type="entry name" value="RPS7p_RPS7a_RPS5e_RPS7o"/>
    <property type="match status" value="1"/>
</dbReference>
<dbReference type="SUPFAM" id="SSF47973">
    <property type="entry name" value="Ribosomal protein S7"/>
    <property type="match status" value="1"/>
</dbReference>
<dbReference type="PROSITE" id="PS00052">
    <property type="entry name" value="RIBOSOMAL_S7"/>
    <property type="match status" value="1"/>
</dbReference>
<proteinExistence type="inferred from homology"/>
<evidence type="ECO:0000255" key="1">
    <source>
        <dbReference type="HAMAP-Rule" id="MF_00480"/>
    </source>
</evidence>
<evidence type="ECO:0000305" key="2"/>
<organism>
    <name type="scientific">Ureaplasma parvum serovar 3 (strain ATCC 27815 / 27 / NCTC 11736)</name>
    <dbReference type="NCBI Taxonomy" id="505682"/>
    <lineage>
        <taxon>Bacteria</taxon>
        <taxon>Bacillati</taxon>
        <taxon>Mycoplasmatota</taxon>
        <taxon>Mycoplasmoidales</taxon>
        <taxon>Mycoplasmoidaceae</taxon>
        <taxon>Ureaplasma</taxon>
    </lineage>
</organism>
<accession>B1AJG5</accession>
<comment type="function">
    <text evidence="1">One of the primary rRNA binding proteins, it binds directly to 16S rRNA where it nucleates assembly of the head domain of the 30S subunit. Is located at the subunit interface close to the decoding center, probably blocks exit of the E-site tRNA.</text>
</comment>
<comment type="subunit">
    <text evidence="1">Part of the 30S ribosomal subunit. Contacts proteins S9 and S11.</text>
</comment>
<comment type="similarity">
    <text evidence="1">Belongs to the universal ribosomal protein uS7 family.</text>
</comment>
<gene>
    <name evidence="1" type="primary">rpsG</name>
    <name type="ordered locus">UPA3_0561</name>
</gene>
<sequence>MRKLKPQKRQVLADPVYNSRLVTKLINAIMYDGKKGLAQSIIYSAFEIVEQKTGKPALEVFNKAIDNVMPIIELKVRRVGGSNFQVPTEVTPERRQTLGLRWITLYARLRHEHTMIEKLAHEIIDASNNVGAAIKKKEDTHKMAEANKAFAHLRW</sequence>
<reference key="1">
    <citation type="submission" date="2008-02" db="EMBL/GenBank/DDBJ databases">
        <title>Genome sequence of Ureaplasma parvum serovar 3.</title>
        <authorList>
            <person name="Methe B.A."/>
            <person name="Glass J."/>
            <person name="Waites K."/>
            <person name="Shrivastava S."/>
        </authorList>
    </citation>
    <scope>NUCLEOTIDE SEQUENCE [LARGE SCALE GENOMIC DNA]</scope>
    <source>
        <strain>ATCC 27815 / 27 / NCTC 11736</strain>
    </source>
</reference>